<gene>
    <name type="ORF">Y75B8A.31</name>
</gene>
<feature type="chain" id="PRO_0000320936" description="FAM172 family protein homolog Y75B8A.31">
    <location>
        <begin position="1"/>
        <end position="313"/>
    </location>
</feature>
<feature type="region of interest" description="Disordered" evidence="1">
    <location>
        <begin position="293"/>
        <end position="313"/>
    </location>
</feature>
<feature type="compositionally biased region" description="Basic and acidic residues" evidence="1">
    <location>
        <begin position="296"/>
        <end position="307"/>
    </location>
</feature>
<organism>
    <name type="scientific">Caenorhabditis elegans</name>
    <dbReference type="NCBI Taxonomy" id="6239"/>
    <lineage>
        <taxon>Eukaryota</taxon>
        <taxon>Metazoa</taxon>
        <taxon>Ecdysozoa</taxon>
        <taxon>Nematoda</taxon>
        <taxon>Chromadorea</taxon>
        <taxon>Rhabditida</taxon>
        <taxon>Rhabditina</taxon>
        <taxon>Rhabditomorpha</taxon>
        <taxon>Rhabditoidea</taxon>
        <taxon>Rhabditidae</taxon>
        <taxon>Peloderinae</taxon>
        <taxon>Caenorhabditis</taxon>
    </lineage>
</organism>
<name>F172A_CAEEL</name>
<protein>
    <recommendedName>
        <fullName>FAM172 family protein homolog Y75B8A.31</fullName>
    </recommendedName>
</protein>
<comment type="similarity">
    <text evidence="2">Belongs to the FAM172 family.</text>
</comment>
<sequence>MSSLAKLGYFFDEKGVLKTEKDKKPFKFTTQEDYEELGEAVDLEVYELLETRCGLKRKALKLPGKTDEDEDLSFIFVSKNFKKAANLLVLIHGSGVVRAGQWARRLIINDNLECGTQIPYIERAIENGWGVVVMNTNLNESKDQDLKYSRTPVEHAETVWIACIEPSNAKSIYVVAHSRGGYDTASVLKKFGGDDRISKICLTDSPWFEFPKSCAQRARPLFVVNFLAHGALNSPSYKVREYREGNVAELWAGTQIHEWSSHCAIDAVFHILETEMTPSNYAEVMEEAKKLVVKSENSKESDDEAPKSKKICV</sequence>
<proteinExistence type="inferred from homology"/>
<accession>Q9XW78</accession>
<evidence type="ECO:0000256" key="1">
    <source>
        <dbReference type="SAM" id="MobiDB-lite"/>
    </source>
</evidence>
<evidence type="ECO:0000305" key="2"/>
<keyword id="KW-1185">Reference proteome</keyword>
<reference key="1">
    <citation type="journal article" date="1998" name="Science">
        <title>Genome sequence of the nematode C. elegans: a platform for investigating biology.</title>
        <authorList>
            <consortium name="The C. elegans sequencing consortium"/>
        </authorList>
    </citation>
    <scope>NUCLEOTIDE SEQUENCE [LARGE SCALE GENOMIC DNA]</scope>
    <source>
        <strain>Bristol N2</strain>
    </source>
</reference>
<dbReference type="EMBL" id="AL033514">
    <property type="protein sequence ID" value="CAA22091.1"/>
    <property type="molecule type" value="Genomic_DNA"/>
</dbReference>
<dbReference type="PIR" id="T27391">
    <property type="entry name" value="T27391"/>
</dbReference>
<dbReference type="RefSeq" id="NP_499604.1">
    <property type="nucleotide sequence ID" value="NM_067203.7"/>
</dbReference>
<dbReference type="SMR" id="Q9XW78"/>
<dbReference type="BioGRID" id="41837">
    <property type="interactions" value="5"/>
</dbReference>
<dbReference type="FunCoup" id="Q9XW78">
    <property type="interactions" value="3220"/>
</dbReference>
<dbReference type="STRING" id="6239.Y75B8A.31.1"/>
<dbReference type="ESTHER" id="caeel-f172a">
    <property type="family name" value="Arb2_FAM172A"/>
</dbReference>
<dbReference type="PaxDb" id="6239-Y75B8A.31"/>
<dbReference type="PeptideAtlas" id="Q9XW78"/>
<dbReference type="EnsemblMetazoa" id="Y75B8A.31.1">
    <property type="protein sequence ID" value="Y75B8A.31.1"/>
    <property type="gene ID" value="WBGene00013561"/>
</dbReference>
<dbReference type="GeneID" id="176658"/>
<dbReference type="KEGG" id="cel:CELE_Y75B8A.31"/>
<dbReference type="UCSC" id="Y75B8A.31">
    <property type="organism name" value="c. elegans"/>
</dbReference>
<dbReference type="AGR" id="WB:WBGene00013561"/>
<dbReference type="CTD" id="176658"/>
<dbReference type="WormBase" id="Y75B8A.31">
    <property type="protein sequence ID" value="CE23042"/>
    <property type="gene ID" value="WBGene00013561"/>
</dbReference>
<dbReference type="eggNOG" id="KOG3967">
    <property type="taxonomic scope" value="Eukaryota"/>
</dbReference>
<dbReference type="GeneTree" id="ENSGT00530000063907"/>
<dbReference type="HOGENOM" id="CLU_048484_0_0_1"/>
<dbReference type="InParanoid" id="Q9XW78"/>
<dbReference type="OMA" id="LAFVELX"/>
<dbReference type="OrthoDB" id="421951at2759"/>
<dbReference type="PhylomeDB" id="Q9XW78"/>
<dbReference type="PRO" id="PR:Q9XW78"/>
<dbReference type="Proteomes" id="UP000001940">
    <property type="component" value="Chromosome III"/>
</dbReference>
<dbReference type="Bgee" id="WBGene00013561">
    <property type="expression patterns" value="Expressed in germ line (C elegans) and 4 other cell types or tissues"/>
</dbReference>
<dbReference type="GO" id="GO:0005634">
    <property type="term" value="C:nucleus"/>
    <property type="evidence" value="ECO:0000318"/>
    <property type="project" value="GO_Central"/>
</dbReference>
<dbReference type="GO" id="GO:0031048">
    <property type="term" value="P:regulatory ncRNA-mediated heterochromatin formation"/>
    <property type="evidence" value="ECO:0000318"/>
    <property type="project" value="GO_Central"/>
</dbReference>
<dbReference type="Gene3D" id="3.40.50.1820">
    <property type="entry name" value="alpha/beta hydrolase"/>
    <property type="match status" value="1"/>
</dbReference>
<dbReference type="InterPro" id="IPR029058">
    <property type="entry name" value="AB_hydrolase_fold"/>
</dbReference>
<dbReference type="InterPro" id="IPR048263">
    <property type="entry name" value="Arb2"/>
</dbReference>
<dbReference type="InterPro" id="IPR053858">
    <property type="entry name" value="Arb2_dom"/>
</dbReference>
<dbReference type="PANTHER" id="PTHR21357">
    <property type="entry name" value="FAM172 FAMILY PROTEIN HOMOLOG CG10038"/>
    <property type="match status" value="1"/>
</dbReference>
<dbReference type="PANTHER" id="PTHR21357:SF4">
    <property type="entry name" value="FAM172 FAMILY PROTEIN HOMOLOG CG10038"/>
    <property type="match status" value="1"/>
</dbReference>
<dbReference type="Pfam" id="PF22749">
    <property type="entry name" value="Arb2"/>
    <property type="match status" value="1"/>
</dbReference>
<dbReference type="SUPFAM" id="SSF53474">
    <property type="entry name" value="alpha/beta-Hydrolases"/>
    <property type="match status" value="1"/>
</dbReference>